<gene>
    <name type="ordered locus">Os06g0718300</name>
    <name type="ordered locus">LOC_Os06g50410</name>
    <name type="ORF">OJ1540_H01.15</name>
    <name type="ORF">P0541C02.23</name>
</gene>
<keyword id="KW-0472">Membrane</keyword>
<keyword id="KW-1185">Reference proteome</keyword>
<keyword id="KW-0812">Transmembrane</keyword>
<keyword id="KW-1133">Transmembrane helix</keyword>
<evidence type="ECO:0000255" key="1"/>
<evidence type="ECO:0000256" key="2">
    <source>
        <dbReference type="SAM" id="MobiDB-lite"/>
    </source>
</evidence>
<evidence type="ECO:0000305" key="3"/>
<protein>
    <recommendedName>
        <fullName>Putative UPF0496 protein 2</fullName>
    </recommendedName>
</protein>
<accession>Q5Z8N6</accession>
<accession>A0A0P0X1D3</accession>
<accession>Q8SB27</accession>
<reference key="1">
    <citation type="journal article" date="2005" name="Nature">
        <title>The map-based sequence of the rice genome.</title>
        <authorList>
            <consortium name="International rice genome sequencing project (IRGSP)"/>
        </authorList>
    </citation>
    <scope>NUCLEOTIDE SEQUENCE [LARGE SCALE GENOMIC DNA]</scope>
    <source>
        <strain>cv. Nipponbare</strain>
    </source>
</reference>
<reference key="2">
    <citation type="journal article" date="2013" name="Rice">
        <title>Improvement of the Oryza sativa Nipponbare reference genome using next generation sequence and optical map data.</title>
        <authorList>
            <person name="Kawahara Y."/>
            <person name="de la Bastide M."/>
            <person name="Hamilton J.P."/>
            <person name="Kanamori H."/>
            <person name="McCombie W.R."/>
            <person name="Ouyang S."/>
            <person name="Schwartz D.C."/>
            <person name="Tanaka T."/>
            <person name="Wu J."/>
            <person name="Zhou S."/>
            <person name="Childs K.L."/>
            <person name="Davidson R.M."/>
            <person name="Lin H."/>
            <person name="Quesada-Ocampo L."/>
            <person name="Vaillancourt B."/>
            <person name="Sakai H."/>
            <person name="Lee S.S."/>
            <person name="Kim J."/>
            <person name="Numa H."/>
            <person name="Itoh T."/>
            <person name="Buell C.R."/>
            <person name="Matsumoto T."/>
        </authorList>
    </citation>
    <scope>GENOME REANNOTATION</scope>
    <source>
        <strain>cv. Nipponbare</strain>
    </source>
</reference>
<name>U496B_ORYSJ</name>
<organism>
    <name type="scientific">Oryza sativa subsp. japonica</name>
    <name type="common">Rice</name>
    <dbReference type="NCBI Taxonomy" id="39947"/>
    <lineage>
        <taxon>Eukaryota</taxon>
        <taxon>Viridiplantae</taxon>
        <taxon>Streptophyta</taxon>
        <taxon>Embryophyta</taxon>
        <taxon>Tracheophyta</taxon>
        <taxon>Spermatophyta</taxon>
        <taxon>Magnoliopsida</taxon>
        <taxon>Liliopsida</taxon>
        <taxon>Poales</taxon>
        <taxon>Poaceae</taxon>
        <taxon>BOP clade</taxon>
        <taxon>Oryzoideae</taxon>
        <taxon>Oryzeae</taxon>
        <taxon>Oryzinae</taxon>
        <taxon>Oryza</taxon>
        <taxon>Oryza sativa</taxon>
    </lineage>
</organism>
<feature type="chain" id="PRO_0000306907" description="Putative UPF0496 protein 2">
    <location>
        <begin position="1"/>
        <end position="408"/>
    </location>
</feature>
<feature type="transmembrane region" description="Helical" evidence="1">
    <location>
        <begin position="224"/>
        <end position="244"/>
    </location>
</feature>
<feature type="transmembrane region" description="Helical" evidence="1">
    <location>
        <begin position="252"/>
        <end position="272"/>
    </location>
</feature>
<feature type="region of interest" description="Disordered" evidence="2">
    <location>
        <begin position="385"/>
        <end position="408"/>
    </location>
</feature>
<comment type="subcellular location">
    <subcellularLocation>
        <location evidence="3">Membrane</location>
        <topology evidence="3">Multi-pass membrane protein</topology>
    </subcellularLocation>
</comment>
<comment type="similarity">
    <text evidence="3">Belongs to the UPF0496 family.</text>
</comment>
<dbReference type="EMBL" id="AC091774">
    <property type="protein sequence ID" value="AAL79713.1"/>
    <property type="molecule type" value="Genomic_DNA"/>
</dbReference>
<dbReference type="EMBL" id="AP003769">
    <property type="protein sequence ID" value="BAD61726.1"/>
    <property type="molecule type" value="Genomic_DNA"/>
</dbReference>
<dbReference type="EMBL" id="AP014962">
    <property type="protein sequence ID" value="BAS99526.1"/>
    <property type="molecule type" value="Genomic_DNA"/>
</dbReference>
<dbReference type="FunCoup" id="Q5Z8N6">
    <property type="interactions" value="1731"/>
</dbReference>
<dbReference type="STRING" id="39947.Q5Z8N6"/>
<dbReference type="PaxDb" id="39947-Q5Z8N6"/>
<dbReference type="EnsemblPlants" id="Os06t0718300-00">
    <property type="protein sequence ID" value="Os06t0718300-00"/>
    <property type="gene ID" value="Os06g0718300"/>
</dbReference>
<dbReference type="Gramene" id="Os06t0718300-00">
    <property type="protein sequence ID" value="Os06t0718300-00"/>
    <property type="gene ID" value="Os06g0718300"/>
</dbReference>
<dbReference type="eggNOG" id="ENOG502QVA7">
    <property type="taxonomic scope" value="Eukaryota"/>
</dbReference>
<dbReference type="HOGENOM" id="CLU_036033_0_0_1"/>
<dbReference type="InParanoid" id="Q5Z8N6"/>
<dbReference type="OMA" id="IAMRGHG"/>
<dbReference type="Proteomes" id="UP000000763">
    <property type="component" value="Chromosome 6"/>
</dbReference>
<dbReference type="Proteomes" id="UP000059680">
    <property type="component" value="Chromosome 6"/>
</dbReference>
<dbReference type="GO" id="GO:0016020">
    <property type="term" value="C:membrane"/>
    <property type="evidence" value="ECO:0007669"/>
    <property type="project" value="UniProtKB-SubCell"/>
</dbReference>
<dbReference type="InterPro" id="IPR007749">
    <property type="entry name" value="DUF677"/>
</dbReference>
<dbReference type="PANTHER" id="PTHR31113:SF20">
    <property type="entry name" value="UPF0496 PROTEIN 2-RELATED"/>
    <property type="match status" value="1"/>
</dbReference>
<dbReference type="PANTHER" id="PTHR31113">
    <property type="entry name" value="UPF0496 PROTEIN 3-RELATED"/>
    <property type="match status" value="1"/>
</dbReference>
<dbReference type="Pfam" id="PF05055">
    <property type="entry name" value="DUF677"/>
    <property type="match status" value="1"/>
</dbReference>
<sequence length="408" mass="44404">MIERSNSTPSATPARPPLAVDEEYNQAFRSKSFLDLWSHAHHHLTHTFSSFKLSTSTPCAGRGGAREDDFLHAGGDGGAADDSEQSCSYTVLDDFVLEPSPESLARGARLQQRRRRRPRRHRVETLLIEYFDVTEEACEACSALLAAIGAARRHHLTLRRLLLRLDGGDDDDAKDALARHVRLDNPLSPGSLSEFHDVHARCSPLASRLAAAQRRLRRLARALRIARGTAAAALVGACAAAIVAAVVLAAHALVGIGVAAAAFGATPAGAARWWGRRAAEKVSSRHYARAGATLDAAARGAYIVGRDLDTVSRMVRRAHDELEHGRDVARIAMRGHGERPLLQEVAREEEECEEDLRAQLAELEEHVCLCLITINRTRRLVAHEMARGLPPPSPATVTTTSEERLTSS</sequence>
<proteinExistence type="inferred from homology"/>